<protein>
    <recommendedName>
        <fullName evidence="1">Protein RecA</fullName>
    </recommendedName>
    <alternativeName>
        <fullName evidence="1">Recombinase A</fullName>
    </alternativeName>
</protein>
<comment type="function">
    <text evidence="1">Can catalyze the hydrolysis of ATP in the presence of single-stranded DNA, the ATP-dependent uptake of single-stranded DNA by duplex DNA, and the ATP-dependent hybridization of homologous single-stranded DNAs. It interacts with LexA causing its activation and leading to its autocatalytic cleavage.</text>
</comment>
<comment type="subcellular location">
    <subcellularLocation>
        <location evidence="1">Cytoplasm</location>
    </subcellularLocation>
</comment>
<comment type="similarity">
    <text evidence="1">Belongs to the RecA family.</text>
</comment>
<keyword id="KW-0067">ATP-binding</keyword>
<keyword id="KW-0963">Cytoplasm</keyword>
<keyword id="KW-0227">DNA damage</keyword>
<keyword id="KW-0233">DNA recombination</keyword>
<keyword id="KW-0234">DNA repair</keyword>
<keyword id="KW-0238">DNA-binding</keyword>
<keyword id="KW-0547">Nucleotide-binding</keyword>
<keyword id="KW-1185">Reference proteome</keyword>
<keyword id="KW-0742">SOS response</keyword>
<dbReference type="EMBL" id="CP000507">
    <property type="protein sequence ID" value="ABL99253.1"/>
    <property type="molecule type" value="Genomic_DNA"/>
</dbReference>
<dbReference type="RefSeq" id="WP_011759162.1">
    <property type="nucleotide sequence ID" value="NC_008700.1"/>
</dbReference>
<dbReference type="SMR" id="A1S4E7"/>
<dbReference type="STRING" id="326297.Sama_1046"/>
<dbReference type="KEGG" id="saz:Sama_1046"/>
<dbReference type="eggNOG" id="COG0468">
    <property type="taxonomic scope" value="Bacteria"/>
</dbReference>
<dbReference type="HOGENOM" id="CLU_040469_3_2_6"/>
<dbReference type="OrthoDB" id="9776733at2"/>
<dbReference type="Proteomes" id="UP000009175">
    <property type="component" value="Chromosome"/>
</dbReference>
<dbReference type="GO" id="GO:0005829">
    <property type="term" value="C:cytosol"/>
    <property type="evidence" value="ECO:0007669"/>
    <property type="project" value="TreeGrafter"/>
</dbReference>
<dbReference type="GO" id="GO:0005524">
    <property type="term" value="F:ATP binding"/>
    <property type="evidence" value="ECO:0007669"/>
    <property type="project" value="UniProtKB-UniRule"/>
</dbReference>
<dbReference type="GO" id="GO:0016887">
    <property type="term" value="F:ATP hydrolysis activity"/>
    <property type="evidence" value="ECO:0007669"/>
    <property type="project" value="InterPro"/>
</dbReference>
<dbReference type="GO" id="GO:0140664">
    <property type="term" value="F:ATP-dependent DNA damage sensor activity"/>
    <property type="evidence" value="ECO:0007669"/>
    <property type="project" value="InterPro"/>
</dbReference>
<dbReference type="GO" id="GO:0003684">
    <property type="term" value="F:damaged DNA binding"/>
    <property type="evidence" value="ECO:0007669"/>
    <property type="project" value="UniProtKB-UniRule"/>
</dbReference>
<dbReference type="GO" id="GO:0003697">
    <property type="term" value="F:single-stranded DNA binding"/>
    <property type="evidence" value="ECO:0007669"/>
    <property type="project" value="UniProtKB-UniRule"/>
</dbReference>
<dbReference type="GO" id="GO:0006310">
    <property type="term" value="P:DNA recombination"/>
    <property type="evidence" value="ECO:0007669"/>
    <property type="project" value="UniProtKB-UniRule"/>
</dbReference>
<dbReference type="GO" id="GO:0006281">
    <property type="term" value="P:DNA repair"/>
    <property type="evidence" value="ECO:0007669"/>
    <property type="project" value="UniProtKB-UniRule"/>
</dbReference>
<dbReference type="GO" id="GO:0009432">
    <property type="term" value="P:SOS response"/>
    <property type="evidence" value="ECO:0007669"/>
    <property type="project" value="UniProtKB-UniRule"/>
</dbReference>
<dbReference type="CDD" id="cd00983">
    <property type="entry name" value="RecA"/>
    <property type="match status" value="1"/>
</dbReference>
<dbReference type="FunFam" id="3.40.50.300:FF:000087">
    <property type="entry name" value="Recombinase RecA"/>
    <property type="match status" value="1"/>
</dbReference>
<dbReference type="Gene3D" id="3.40.50.300">
    <property type="entry name" value="P-loop containing nucleotide triphosphate hydrolases"/>
    <property type="match status" value="1"/>
</dbReference>
<dbReference type="HAMAP" id="MF_00268">
    <property type="entry name" value="RecA"/>
    <property type="match status" value="1"/>
</dbReference>
<dbReference type="InterPro" id="IPR003593">
    <property type="entry name" value="AAA+_ATPase"/>
</dbReference>
<dbReference type="InterPro" id="IPR013765">
    <property type="entry name" value="DNA_recomb/repair_RecA"/>
</dbReference>
<dbReference type="InterPro" id="IPR020584">
    <property type="entry name" value="DNA_recomb/repair_RecA_CS"/>
</dbReference>
<dbReference type="InterPro" id="IPR027417">
    <property type="entry name" value="P-loop_NTPase"/>
</dbReference>
<dbReference type="InterPro" id="IPR049261">
    <property type="entry name" value="RecA-like_C"/>
</dbReference>
<dbReference type="InterPro" id="IPR049428">
    <property type="entry name" value="RecA-like_N"/>
</dbReference>
<dbReference type="InterPro" id="IPR020588">
    <property type="entry name" value="RecA_ATP-bd"/>
</dbReference>
<dbReference type="InterPro" id="IPR023400">
    <property type="entry name" value="RecA_C_sf"/>
</dbReference>
<dbReference type="InterPro" id="IPR020587">
    <property type="entry name" value="RecA_monomer-monomer_interface"/>
</dbReference>
<dbReference type="NCBIfam" id="TIGR02012">
    <property type="entry name" value="tigrfam_recA"/>
    <property type="match status" value="1"/>
</dbReference>
<dbReference type="PANTHER" id="PTHR45900:SF1">
    <property type="entry name" value="MITOCHONDRIAL DNA REPAIR PROTEIN RECA HOMOLOG-RELATED"/>
    <property type="match status" value="1"/>
</dbReference>
<dbReference type="PANTHER" id="PTHR45900">
    <property type="entry name" value="RECA"/>
    <property type="match status" value="1"/>
</dbReference>
<dbReference type="Pfam" id="PF00154">
    <property type="entry name" value="RecA"/>
    <property type="match status" value="1"/>
</dbReference>
<dbReference type="Pfam" id="PF21096">
    <property type="entry name" value="RecA_C"/>
    <property type="match status" value="1"/>
</dbReference>
<dbReference type="PRINTS" id="PR00142">
    <property type="entry name" value="RECA"/>
</dbReference>
<dbReference type="SMART" id="SM00382">
    <property type="entry name" value="AAA"/>
    <property type="match status" value="1"/>
</dbReference>
<dbReference type="SUPFAM" id="SSF52540">
    <property type="entry name" value="P-loop containing nucleoside triphosphate hydrolases"/>
    <property type="match status" value="1"/>
</dbReference>
<dbReference type="SUPFAM" id="SSF54752">
    <property type="entry name" value="RecA protein, C-terminal domain"/>
    <property type="match status" value="1"/>
</dbReference>
<dbReference type="PROSITE" id="PS00321">
    <property type="entry name" value="RECA_1"/>
    <property type="match status" value="1"/>
</dbReference>
<dbReference type="PROSITE" id="PS50162">
    <property type="entry name" value="RECA_2"/>
    <property type="match status" value="1"/>
</dbReference>
<dbReference type="PROSITE" id="PS50163">
    <property type="entry name" value="RECA_3"/>
    <property type="match status" value="1"/>
</dbReference>
<gene>
    <name evidence="1" type="primary">recA</name>
    <name type="ordered locus">Sama_1046</name>
</gene>
<feature type="chain" id="PRO_1000047990" description="Protein RecA">
    <location>
        <begin position="1"/>
        <end position="355"/>
    </location>
</feature>
<feature type="binding site" evidence="1">
    <location>
        <begin position="67"/>
        <end position="74"/>
    </location>
    <ligand>
        <name>ATP</name>
        <dbReference type="ChEBI" id="CHEBI:30616"/>
    </ligand>
</feature>
<organism>
    <name type="scientific">Shewanella amazonensis (strain ATCC BAA-1098 / SB2B)</name>
    <dbReference type="NCBI Taxonomy" id="326297"/>
    <lineage>
        <taxon>Bacteria</taxon>
        <taxon>Pseudomonadati</taxon>
        <taxon>Pseudomonadota</taxon>
        <taxon>Gammaproteobacteria</taxon>
        <taxon>Alteromonadales</taxon>
        <taxon>Shewanellaceae</taxon>
        <taxon>Shewanella</taxon>
    </lineage>
</organism>
<proteinExistence type="inferred from homology"/>
<evidence type="ECO:0000255" key="1">
    <source>
        <dbReference type="HAMAP-Rule" id="MF_00268"/>
    </source>
</evidence>
<name>RECA_SHEAM</name>
<reference key="1">
    <citation type="submission" date="2006-12" db="EMBL/GenBank/DDBJ databases">
        <title>Complete sequence of Shewanella amazonensis SB2B.</title>
        <authorList>
            <consortium name="US DOE Joint Genome Institute"/>
            <person name="Copeland A."/>
            <person name="Lucas S."/>
            <person name="Lapidus A."/>
            <person name="Barry K."/>
            <person name="Detter J.C."/>
            <person name="Glavina del Rio T."/>
            <person name="Hammon N."/>
            <person name="Israni S."/>
            <person name="Dalin E."/>
            <person name="Tice H."/>
            <person name="Pitluck S."/>
            <person name="Munk A.C."/>
            <person name="Brettin T."/>
            <person name="Bruce D."/>
            <person name="Han C."/>
            <person name="Tapia R."/>
            <person name="Gilna P."/>
            <person name="Schmutz J."/>
            <person name="Larimer F."/>
            <person name="Land M."/>
            <person name="Hauser L."/>
            <person name="Kyrpides N."/>
            <person name="Mikhailova N."/>
            <person name="Fredrickson J."/>
            <person name="Richardson P."/>
        </authorList>
    </citation>
    <scope>NUCLEOTIDE SEQUENCE [LARGE SCALE GENOMIC DNA]</scope>
    <source>
        <strain>ATCC BAA-1098 / SB2B</strain>
    </source>
</reference>
<accession>A1S4E7</accession>
<sequence length="355" mass="38090">MKIDPNKEKALAAVLGQIEKQFGKGSIMKLGEDRSMDVETISTGSLSLDVALGAGGLPMGRIVEIYGPESSGKTTLTLEVIAAAQREGKVCAFIDAEHALDPVYARKLGVDIDNLLCSQPDTGEQALEICDALTRSGAVDVIIVDSVAALVPKAEIEGEIGDSHVGLAARMMSQAMRKLAGNLKQSNTLLIFINQIRMKIGVMFGNPETTTGGNALKFYASVRLDIRRTGAIKEGDEVVGNETRVKVVKNKIAAPFRQADFQILYGQGINRTGELVDLGVLHKLIEKSGAWYSYKGDKIGQGRANATKFLAENTEIAAEIEKTLREMLLSHSSSSGSADEVEGDENIDFETGEVF</sequence>